<keyword id="KW-1185">Reference proteome</keyword>
<keyword id="KW-0687">Ribonucleoprotein</keyword>
<keyword id="KW-0689">Ribosomal protein</keyword>
<keyword id="KW-0694">RNA-binding</keyword>
<keyword id="KW-0699">rRNA-binding</keyword>
<keyword id="KW-0820">tRNA-binding</keyword>
<proteinExistence type="inferred from homology"/>
<sequence>MLQPKRTKFRKMHKGRNRGLAQGTDVSFGSFGLKAVGRGRLTARQIEAARRAMTRAVKRQGKIWIRVFPDKPITEKPLAVRMGKGKGNVEYWVALIQPGKVLYEMGGVPEELAREAFKLAAAKLPIKTTFVTKTVM</sequence>
<reference key="1">
    <citation type="journal article" date="2002" name="Nucleic Acids Res.">
        <title>Genome sequence of Shigella flexneri 2a: insights into pathogenicity through comparison with genomes of Escherichia coli K12 and O157.</title>
        <authorList>
            <person name="Jin Q."/>
            <person name="Yuan Z."/>
            <person name="Xu J."/>
            <person name="Wang Y."/>
            <person name="Shen Y."/>
            <person name="Lu W."/>
            <person name="Wang J."/>
            <person name="Liu H."/>
            <person name="Yang J."/>
            <person name="Yang F."/>
            <person name="Zhang X."/>
            <person name="Zhang J."/>
            <person name="Yang G."/>
            <person name="Wu H."/>
            <person name="Qu D."/>
            <person name="Dong J."/>
            <person name="Sun L."/>
            <person name="Xue Y."/>
            <person name="Zhao A."/>
            <person name="Gao Y."/>
            <person name="Zhu J."/>
            <person name="Kan B."/>
            <person name="Ding K."/>
            <person name="Chen S."/>
            <person name="Cheng H."/>
            <person name="Yao Z."/>
            <person name="He B."/>
            <person name="Chen R."/>
            <person name="Ma D."/>
            <person name="Qiang B."/>
            <person name="Wen Y."/>
            <person name="Hou Y."/>
            <person name="Yu J."/>
        </authorList>
    </citation>
    <scope>NUCLEOTIDE SEQUENCE [LARGE SCALE GENOMIC DNA]</scope>
    <source>
        <strain>301 / Serotype 2a</strain>
    </source>
</reference>
<reference key="2">
    <citation type="journal article" date="2003" name="Infect. Immun.">
        <title>Complete genome sequence and comparative genomics of Shigella flexneri serotype 2a strain 2457T.</title>
        <authorList>
            <person name="Wei J."/>
            <person name="Goldberg M.B."/>
            <person name="Burland V."/>
            <person name="Venkatesan M.M."/>
            <person name="Deng W."/>
            <person name="Fournier G."/>
            <person name="Mayhew G.F."/>
            <person name="Plunkett G. III"/>
            <person name="Rose D.J."/>
            <person name="Darling A."/>
            <person name="Mau B."/>
            <person name="Perna N.T."/>
            <person name="Payne S.M."/>
            <person name="Runyen-Janecky L.J."/>
            <person name="Zhou S."/>
            <person name="Schwartz D.C."/>
            <person name="Blattner F.R."/>
        </authorList>
    </citation>
    <scope>NUCLEOTIDE SEQUENCE [LARGE SCALE GENOMIC DNA]</scope>
    <source>
        <strain>ATCC 700930 / 2457T / Serotype 2a</strain>
    </source>
</reference>
<feature type="chain" id="PRO_0000062198" description="Large ribosomal subunit protein uL16">
    <location>
        <begin position="1"/>
        <end position="136"/>
    </location>
</feature>
<feature type="sequence conflict" description="In Ref. 2; AAP19368." evidence="2" ref="2">
    <original>G</original>
    <variation>D</variation>
    <location>
        <position position="106"/>
    </location>
</feature>
<evidence type="ECO:0000255" key="1">
    <source>
        <dbReference type="HAMAP-Rule" id="MF_01342"/>
    </source>
</evidence>
<evidence type="ECO:0000305" key="2"/>
<protein>
    <recommendedName>
        <fullName evidence="1">Large ribosomal subunit protein uL16</fullName>
    </recommendedName>
    <alternativeName>
        <fullName evidence="2">50S ribosomal protein L16</fullName>
    </alternativeName>
</protein>
<name>RL16_SHIFL</name>
<comment type="function">
    <text evidence="1">Binds 23S rRNA and is also seen to make contacts with the A and possibly P site tRNAs.</text>
</comment>
<comment type="subunit">
    <text evidence="1">Part of the 50S ribosomal subunit.</text>
</comment>
<comment type="similarity">
    <text evidence="1">Belongs to the universal ribosomal protein uL16 family.</text>
</comment>
<accession>Q83PY6</accession>
<dbReference type="EMBL" id="AE005674">
    <property type="protein sequence ID" value="AAN44808.1"/>
    <property type="molecule type" value="Genomic_DNA"/>
</dbReference>
<dbReference type="EMBL" id="AE014073">
    <property type="protein sequence ID" value="AAP19368.1"/>
    <property type="molecule type" value="Genomic_DNA"/>
</dbReference>
<dbReference type="RefSeq" id="NP_709101.1">
    <property type="nucleotide sequence ID" value="NC_004337.2"/>
</dbReference>
<dbReference type="RefSeq" id="WP_000941213.1">
    <property type="nucleotide sequence ID" value="NZ_CP123365.1"/>
</dbReference>
<dbReference type="SMR" id="Q83PY6"/>
<dbReference type="STRING" id="198214.SF3345"/>
<dbReference type="PaxDb" id="198214-SF3345"/>
<dbReference type="GeneID" id="1026982"/>
<dbReference type="KEGG" id="sfl:SF3345"/>
<dbReference type="KEGG" id="sfx:S4417"/>
<dbReference type="PATRIC" id="fig|198214.7.peg.3954"/>
<dbReference type="HOGENOM" id="CLU_078858_2_1_6"/>
<dbReference type="Proteomes" id="UP000001006">
    <property type="component" value="Chromosome"/>
</dbReference>
<dbReference type="Proteomes" id="UP000002673">
    <property type="component" value="Chromosome"/>
</dbReference>
<dbReference type="GO" id="GO:0022625">
    <property type="term" value="C:cytosolic large ribosomal subunit"/>
    <property type="evidence" value="ECO:0007669"/>
    <property type="project" value="TreeGrafter"/>
</dbReference>
<dbReference type="GO" id="GO:0019843">
    <property type="term" value="F:rRNA binding"/>
    <property type="evidence" value="ECO:0007669"/>
    <property type="project" value="UniProtKB-UniRule"/>
</dbReference>
<dbReference type="GO" id="GO:0003735">
    <property type="term" value="F:structural constituent of ribosome"/>
    <property type="evidence" value="ECO:0007669"/>
    <property type="project" value="InterPro"/>
</dbReference>
<dbReference type="GO" id="GO:0000049">
    <property type="term" value="F:tRNA binding"/>
    <property type="evidence" value="ECO:0007669"/>
    <property type="project" value="UniProtKB-KW"/>
</dbReference>
<dbReference type="GO" id="GO:0006412">
    <property type="term" value="P:translation"/>
    <property type="evidence" value="ECO:0007669"/>
    <property type="project" value="UniProtKB-UniRule"/>
</dbReference>
<dbReference type="CDD" id="cd01433">
    <property type="entry name" value="Ribosomal_L16_L10e"/>
    <property type="match status" value="1"/>
</dbReference>
<dbReference type="FunFam" id="3.90.1170.10:FF:000001">
    <property type="entry name" value="50S ribosomal protein L16"/>
    <property type="match status" value="1"/>
</dbReference>
<dbReference type="Gene3D" id="3.90.1170.10">
    <property type="entry name" value="Ribosomal protein L10e/L16"/>
    <property type="match status" value="1"/>
</dbReference>
<dbReference type="HAMAP" id="MF_01342">
    <property type="entry name" value="Ribosomal_uL16"/>
    <property type="match status" value="1"/>
</dbReference>
<dbReference type="InterPro" id="IPR047873">
    <property type="entry name" value="Ribosomal_uL16"/>
</dbReference>
<dbReference type="InterPro" id="IPR000114">
    <property type="entry name" value="Ribosomal_uL16_bact-type"/>
</dbReference>
<dbReference type="InterPro" id="IPR020798">
    <property type="entry name" value="Ribosomal_uL16_CS"/>
</dbReference>
<dbReference type="InterPro" id="IPR016180">
    <property type="entry name" value="Ribosomal_uL16_dom"/>
</dbReference>
<dbReference type="InterPro" id="IPR036920">
    <property type="entry name" value="Ribosomal_uL16_sf"/>
</dbReference>
<dbReference type="NCBIfam" id="TIGR01164">
    <property type="entry name" value="rplP_bact"/>
    <property type="match status" value="1"/>
</dbReference>
<dbReference type="PANTHER" id="PTHR12220">
    <property type="entry name" value="50S/60S RIBOSOMAL PROTEIN L16"/>
    <property type="match status" value="1"/>
</dbReference>
<dbReference type="PANTHER" id="PTHR12220:SF13">
    <property type="entry name" value="LARGE RIBOSOMAL SUBUNIT PROTEIN UL16M"/>
    <property type="match status" value="1"/>
</dbReference>
<dbReference type="Pfam" id="PF00252">
    <property type="entry name" value="Ribosomal_L16"/>
    <property type="match status" value="1"/>
</dbReference>
<dbReference type="PRINTS" id="PR00060">
    <property type="entry name" value="RIBOSOMALL16"/>
</dbReference>
<dbReference type="SUPFAM" id="SSF54686">
    <property type="entry name" value="Ribosomal protein L16p/L10e"/>
    <property type="match status" value="1"/>
</dbReference>
<dbReference type="PROSITE" id="PS00586">
    <property type="entry name" value="RIBOSOMAL_L16_1"/>
    <property type="match status" value="1"/>
</dbReference>
<dbReference type="PROSITE" id="PS00701">
    <property type="entry name" value="RIBOSOMAL_L16_2"/>
    <property type="match status" value="1"/>
</dbReference>
<gene>
    <name evidence="1" type="primary">rplP</name>
    <name type="ordered locus">SF3345</name>
    <name type="ordered locus">S4417</name>
</gene>
<organism>
    <name type="scientific">Shigella flexneri</name>
    <dbReference type="NCBI Taxonomy" id="623"/>
    <lineage>
        <taxon>Bacteria</taxon>
        <taxon>Pseudomonadati</taxon>
        <taxon>Pseudomonadota</taxon>
        <taxon>Gammaproteobacteria</taxon>
        <taxon>Enterobacterales</taxon>
        <taxon>Enterobacteriaceae</taxon>
        <taxon>Shigella</taxon>
    </lineage>
</organism>